<name>VHAA1_ARATH</name>
<protein>
    <recommendedName>
        <fullName evidence="5">V-type proton ATPase subunit a1</fullName>
        <shortName evidence="5">V-ATPase subunit a1</shortName>
    </recommendedName>
    <alternativeName>
        <fullName evidence="5">V-type proton ATPase 95 kDa subunit a isoform 1</fullName>
        <shortName evidence="5">V-ATPase 95 kDa isoform a1</shortName>
    </alternativeName>
    <alternativeName>
        <fullName evidence="5">Vacuolar H(+)-ATPase subunit a isoform 1</fullName>
    </alternativeName>
    <alternativeName>
        <fullName evidence="5">Vacuolar proton pump subunit a1</fullName>
    </alternativeName>
    <alternativeName>
        <fullName evidence="5">Vacuolar proton translocating ATPase 95 kDa subunit a isoform 1</fullName>
    </alternativeName>
</protein>
<reference key="1">
    <citation type="journal article" date="1999" name="Nature">
        <title>Sequence and analysis of chromosome 2 of the plant Arabidopsis thaliana.</title>
        <authorList>
            <person name="Lin X."/>
            <person name="Kaul S."/>
            <person name="Rounsley S.D."/>
            <person name="Shea T.P."/>
            <person name="Benito M.-I."/>
            <person name="Town C.D."/>
            <person name="Fujii C.Y."/>
            <person name="Mason T.M."/>
            <person name="Bowman C.L."/>
            <person name="Barnstead M.E."/>
            <person name="Feldblyum T.V."/>
            <person name="Buell C.R."/>
            <person name="Ketchum K.A."/>
            <person name="Lee J.J."/>
            <person name="Ronning C.M."/>
            <person name="Koo H.L."/>
            <person name="Moffat K.S."/>
            <person name="Cronin L.A."/>
            <person name="Shen M."/>
            <person name="Pai G."/>
            <person name="Van Aken S."/>
            <person name="Umayam L."/>
            <person name="Tallon L.J."/>
            <person name="Gill J.E."/>
            <person name="Adams M.D."/>
            <person name="Carrera A.J."/>
            <person name="Creasy T.H."/>
            <person name="Goodman H.M."/>
            <person name="Somerville C.R."/>
            <person name="Copenhaver G.P."/>
            <person name="Preuss D."/>
            <person name="Nierman W.C."/>
            <person name="White O."/>
            <person name="Eisen J.A."/>
            <person name="Salzberg S.L."/>
            <person name="Fraser C.M."/>
            <person name="Venter J.C."/>
        </authorList>
    </citation>
    <scope>NUCLEOTIDE SEQUENCE [LARGE SCALE GENOMIC DNA]</scope>
    <source>
        <strain>cv. Columbia</strain>
    </source>
</reference>
<reference key="2">
    <citation type="journal article" date="2017" name="Plant J.">
        <title>Araport11: a complete reannotation of the Arabidopsis thaliana reference genome.</title>
        <authorList>
            <person name="Cheng C.Y."/>
            <person name="Krishnakumar V."/>
            <person name="Chan A.P."/>
            <person name="Thibaud-Nissen F."/>
            <person name="Schobel S."/>
            <person name="Town C.D."/>
        </authorList>
    </citation>
    <scope>GENOME REANNOTATION</scope>
    <source>
        <strain>cv. Columbia</strain>
    </source>
</reference>
<reference key="3">
    <citation type="journal article" date="2003" name="Science">
        <title>Empirical analysis of transcriptional activity in the Arabidopsis genome.</title>
        <authorList>
            <person name="Yamada K."/>
            <person name="Lim J."/>
            <person name="Dale J.M."/>
            <person name="Chen H."/>
            <person name="Shinn P."/>
            <person name="Palm C.J."/>
            <person name="Southwick A.M."/>
            <person name="Wu H.C."/>
            <person name="Kim C.J."/>
            <person name="Nguyen M."/>
            <person name="Pham P.K."/>
            <person name="Cheuk R.F."/>
            <person name="Karlin-Newmann G."/>
            <person name="Liu S.X."/>
            <person name="Lam B."/>
            <person name="Sakano H."/>
            <person name="Wu T."/>
            <person name="Yu G."/>
            <person name="Miranda M."/>
            <person name="Quach H.L."/>
            <person name="Tripp M."/>
            <person name="Chang C.H."/>
            <person name="Lee J.M."/>
            <person name="Toriumi M.J."/>
            <person name="Chan M.M."/>
            <person name="Tang C.C."/>
            <person name="Onodera C.S."/>
            <person name="Deng J.M."/>
            <person name="Akiyama K."/>
            <person name="Ansari Y."/>
            <person name="Arakawa T."/>
            <person name="Banh J."/>
            <person name="Banno F."/>
            <person name="Bowser L."/>
            <person name="Brooks S.Y."/>
            <person name="Carninci P."/>
            <person name="Chao Q."/>
            <person name="Choy N."/>
            <person name="Enju A."/>
            <person name="Goldsmith A.D."/>
            <person name="Gurjal M."/>
            <person name="Hansen N.F."/>
            <person name="Hayashizaki Y."/>
            <person name="Johnson-Hopson C."/>
            <person name="Hsuan V.W."/>
            <person name="Iida K."/>
            <person name="Karnes M."/>
            <person name="Khan S."/>
            <person name="Koesema E."/>
            <person name="Ishida J."/>
            <person name="Jiang P.X."/>
            <person name="Jones T."/>
            <person name="Kawai J."/>
            <person name="Kamiya A."/>
            <person name="Meyers C."/>
            <person name="Nakajima M."/>
            <person name="Narusaka M."/>
            <person name="Seki M."/>
            <person name="Sakurai T."/>
            <person name="Satou M."/>
            <person name="Tamse R."/>
            <person name="Vaysberg M."/>
            <person name="Wallender E.K."/>
            <person name="Wong C."/>
            <person name="Yamamura Y."/>
            <person name="Yuan S."/>
            <person name="Shinozaki K."/>
            <person name="Davis R.W."/>
            <person name="Theologis A."/>
            <person name="Ecker J.R."/>
        </authorList>
    </citation>
    <scope>NUCLEOTIDE SEQUENCE [LARGE SCALE MRNA]</scope>
    <source>
        <strain>cv. Columbia</strain>
    </source>
</reference>
<reference key="4">
    <citation type="submission" date="2006-07" db="EMBL/GenBank/DDBJ databases">
        <title>Large-scale analysis of RIKEN Arabidopsis full-length (RAFL) cDNAs.</title>
        <authorList>
            <person name="Totoki Y."/>
            <person name="Seki M."/>
            <person name="Ishida J."/>
            <person name="Nakajima M."/>
            <person name="Enju A."/>
            <person name="Kamiya A."/>
            <person name="Narusaka M."/>
            <person name="Shin-i T."/>
            <person name="Nakagawa M."/>
            <person name="Sakamoto N."/>
            <person name="Oishi K."/>
            <person name="Kohara Y."/>
            <person name="Kobayashi M."/>
            <person name="Toyoda A."/>
            <person name="Sakaki Y."/>
            <person name="Sakurai T."/>
            <person name="Iida K."/>
            <person name="Akiyama K."/>
            <person name="Satou M."/>
            <person name="Toyoda T."/>
            <person name="Konagaya A."/>
            <person name="Carninci P."/>
            <person name="Kawai J."/>
            <person name="Hayashizaki Y."/>
            <person name="Shinozaki K."/>
        </authorList>
    </citation>
    <scope>NUCLEOTIDE SEQUENCE [LARGE SCALE MRNA] OF 402-817</scope>
    <source>
        <strain>cv. Columbia</strain>
    </source>
</reference>
<reference key="5">
    <citation type="journal article" date="2002" name="Trends Plant Sci.">
        <title>A simple nomenclature for a complex proton pump: VHA genes encode the vacuolar H(+)-ATPase.</title>
        <authorList>
            <person name="Sze H."/>
            <person name="Schumacher K."/>
            <person name="Mueller M.L."/>
            <person name="Padmanaban S."/>
            <person name="Taiz L."/>
        </authorList>
    </citation>
    <scope>GENE FAMILY</scope>
    <scope>NOMENCLATURE</scope>
</reference>
<reference key="6">
    <citation type="journal article" date="2006" name="Plant Cell">
        <title>Vacuolar H(+)-ATPase activity is required for endocytic and secretory trafficking in Arabidopsis.</title>
        <authorList>
            <person name="Dettmer J."/>
            <person name="Hong-Hermesdorf A."/>
            <person name="Stierhof Y.-D."/>
            <person name="Schumacher K."/>
        </authorList>
    </citation>
    <scope>SUBCELLULAR LOCATION</scope>
    <scope>GENE FAMILY</scope>
</reference>
<reference key="7">
    <citation type="journal article" date="2007" name="Plant J.">
        <title>Function of the anion transporter AtCLC-d in the trans-Golgi network.</title>
        <authorList>
            <person name="von der Fecht-Bartenbach J."/>
            <person name="Bogner M."/>
            <person name="Krebs M."/>
            <person name="Stierhof Y.-D."/>
            <person name="Schumacher K."/>
            <person name="Ludewig U."/>
        </authorList>
    </citation>
    <scope>SUBCELLULAR LOCATION</scope>
</reference>
<reference key="8">
    <citation type="journal article" date="2008" name="Plant Cell">
        <title>Rab-A2 and Rab-A3 GTPases define a trans-Golgi endosomal membrane domain in Arabidopsis that contributes substantially to the cell plate.</title>
        <authorList>
            <person name="Chow C.M."/>
            <person name="Neto H."/>
            <person name="Foucart C."/>
            <person name="Moore I."/>
        </authorList>
    </citation>
    <scope>SUBCELLULAR LOCATION</scope>
</reference>
<reference key="9">
    <citation type="journal article" date="2008" name="Plant Cell">
        <title>Reduced V-ATPase activity in the trans-Golgi network causes oxylipin-dependent hypocotyl growth Inhibition in Arabidopsis.</title>
        <authorList>
            <person name="Bruex A."/>
            <person name="Liu T.-Y."/>
            <person name="Krebs M."/>
            <person name="Stierhof Y.-D."/>
            <person name="Lohmann J.U."/>
            <person name="Miersch O."/>
            <person name="Wasternack C."/>
            <person name="Schumacher K."/>
        </authorList>
    </citation>
    <scope>FUNCTION</scope>
    <scope>DISRUPTION PHENOTYPE</scope>
    <source>
        <strain>cv. Columbia</strain>
    </source>
</reference>
<reference key="10">
    <citation type="journal article" date="2009" name="Plant Cell">
        <title>Pausing of Golgi bodies on microtubules regulates secretion of cellulose synthase complexes in Arabidopsis.</title>
        <authorList>
            <person name="Crowell E.F."/>
            <person name="Bischoff V."/>
            <person name="Desprez T."/>
            <person name="Rolland A."/>
            <person name="Stierhof Y.-D."/>
            <person name="Schumacher K."/>
            <person name="Gonneau M."/>
            <person name="Hoefte H."/>
            <person name="Vernhettes S."/>
        </authorList>
    </citation>
    <scope>SUBCELLULAR LOCATION</scope>
</reference>
<reference key="11">
    <citation type="journal article" date="2011" name="Proc. Natl. Acad. Sci. U.S.A.">
        <title>Conserved Arabidopsis ECHIDNA protein mediates trans-Golgi-network trafficking and cell elongation.</title>
        <authorList>
            <person name="Gendre D."/>
            <person name="Oh J."/>
            <person name="Boutte Y."/>
            <person name="Best J.G."/>
            <person name="Samuels L."/>
            <person name="Nilsson R."/>
            <person name="Uemura T."/>
            <person name="Marchant A."/>
            <person name="Bennett M.J."/>
            <person name="Grebe M."/>
            <person name="Bhalerao R.P."/>
        </authorList>
    </citation>
    <scope>SUBCELLULAR LOCATION</scope>
</reference>
<reference key="12">
    <citation type="journal article" date="2013" name="Plant Cell">
        <title>Trans-Golgi network localized ECHIDNA/Ypt interacting protein complex is required for the secretion of cell wall polysaccharides in Arabidopsis.</title>
        <authorList>
            <person name="Gendre D."/>
            <person name="McFarlane H.E."/>
            <person name="Johnson E."/>
            <person name="Mouille G."/>
            <person name="Sjoedin A."/>
            <person name="Oh J."/>
            <person name="Levesque-Tremblay G."/>
            <person name="Watanabe Y."/>
            <person name="Samuels L."/>
            <person name="Bhalerao R.P."/>
        </authorList>
    </citation>
    <scope>SUBCELLULAR LOCATION</scope>
    <source>
        <strain>cv. Columbia</strain>
    </source>
</reference>
<feature type="chain" id="PRO_0000419779" description="V-type proton ATPase subunit a1">
    <location>
        <begin position="1"/>
        <end position="817"/>
    </location>
</feature>
<feature type="topological domain" description="Cytoplasmic" evidence="2">
    <location>
        <begin position="1"/>
        <end position="422"/>
    </location>
</feature>
<feature type="transmembrane region" description="Helical" evidence="2">
    <location>
        <begin position="423"/>
        <end position="443"/>
    </location>
</feature>
<feature type="topological domain" description="Vacuolar" evidence="2">
    <location>
        <begin position="444"/>
        <end position="468"/>
    </location>
</feature>
<feature type="transmembrane region" description="Helical" evidence="2">
    <location>
        <begin position="469"/>
        <end position="489"/>
    </location>
</feature>
<feature type="topological domain" description="Cytoplasmic" evidence="2">
    <location>
        <begin position="490"/>
        <end position="547"/>
    </location>
</feature>
<feature type="transmembrane region" description="Helical" evidence="2">
    <location>
        <begin position="548"/>
        <end position="568"/>
    </location>
</feature>
<feature type="topological domain" description="Vacuolar" evidence="2">
    <location>
        <begin position="569"/>
        <end position="580"/>
    </location>
</feature>
<feature type="transmembrane region" description="Helical" evidence="2">
    <location>
        <begin position="581"/>
        <end position="601"/>
    </location>
</feature>
<feature type="topological domain" description="Cytoplasmic" evidence="2">
    <location>
        <begin position="602"/>
        <end position="639"/>
    </location>
</feature>
<feature type="transmembrane region" description="Helical" evidence="2">
    <location>
        <begin position="640"/>
        <end position="660"/>
    </location>
</feature>
<feature type="topological domain" description="Vacuolar" evidence="2">
    <location>
        <begin position="661"/>
        <end position="758"/>
    </location>
</feature>
<feature type="transmembrane region" description="Helical" evidence="2">
    <location>
        <begin position="759"/>
        <end position="779"/>
    </location>
</feature>
<feature type="topological domain" description="Cytoplasmic" evidence="2">
    <location>
        <begin position="780"/>
        <end position="817"/>
    </location>
</feature>
<feature type="coiled-coil region" evidence="2">
    <location>
        <begin position="97"/>
        <end position="133"/>
    </location>
</feature>
<comment type="function">
    <text evidence="3">Essential component of the vacuolar proton pump (V-ATPase), a multimeric enzyme that catalyzes the translocation of protons across the membranes. Required for assembly and activity of the V-ATPase. Required during cell expansion.</text>
</comment>
<comment type="subunit">
    <text evidence="1">V-ATPase is a heteromultimeric enzyme composed of a peripheral catalytic V1 complex (components A to H) attached to an integral membrane V0 proton pore complex (components: a, c, c'', d and e).</text>
</comment>
<comment type="subcellular location">
    <subcellularLocation>
        <location evidence="1">Vacuole membrane</location>
        <topology evidence="2">Multi-pass membrane protein</topology>
    </subcellularLocation>
    <subcellularLocation>
        <location evidence="4">Golgi apparatus</location>
        <location evidence="4">trans-Golgi network membrane</location>
        <topology evidence="2">Multi-pass membrane protein</topology>
    </subcellularLocation>
</comment>
<comment type="disruption phenotype">
    <text evidence="3">Lethal.</text>
</comment>
<comment type="similarity">
    <text evidence="6">Belongs to the V-ATPase 116 kDa subunit family.</text>
</comment>
<comment type="sequence caution" evidence="6">
    <conflict type="erroneous gene model prediction">
        <sequence resource="EMBL-CDS" id="AAD21487"/>
    </conflict>
</comment>
<gene>
    <name evidence="5" type="primary">VHA-a1</name>
    <name evidence="7" type="ordered locus">At2g28520</name>
    <name evidence="8" type="ORF">T17D12.8</name>
</gene>
<accession>Q8RWZ7</accession>
<accession>Q0WM70</accession>
<accession>Q9SK06</accession>
<dbReference type="EMBL" id="AC006587">
    <property type="protein sequence ID" value="AAD21487.2"/>
    <property type="status" value="ALT_SEQ"/>
    <property type="molecule type" value="Genomic_DNA"/>
</dbReference>
<dbReference type="EMBL" id="CP002685">
    <property type="protein sequence ID" value="AEC08134.1"/>
    <property type="molecule type" value="Genomic_DNA"/>
</dbReference>
<dbReference type="EMBL" id="AY091008">
    <property type="protein sequence ID" value="AAM14030.1"/>
    <property type="molecule type" value="mRNA"/>
</dbReference>
<dbReference type="EMBL" id="AK229960">
    <property type="protein sequence ID" value="BAF01786.1"/>
    <property type="molecule type" value="mRNA"/>
</dbReference>
<dbReference type="PIR" id="H84685">
    <property type="entry name" value="H84685"/>
</dbReference>
<dbReference type="RefSeq" id="NP_850122.1">
    <property type="nucleotide sequence ID" value="NM_179791.2"/>
</dbReference>
<dbReference type="SMR" id="Q8RWZ7"/>
<dbReference type="BioGRID" id="2750">
    <property type="interactions" value="1"/>
</dbReference>
<dbReference type="FunCoup" id="Q8RWZ7">
    <property type="interactions" value="3086"/>
</dbReference>
<dbReference type="STRING" id="3702.Q8RWZ7"/>
<dbReference type="PaxDb" id="3702-AT2G28520.1"/>
<dbReference type="ProteomicsDB" id="228607"/>
<dbReference type="EnsemblPlants" id="AT2G28520.1">
    <property type="protein sequence ID" value="AT2G28520.1"/>
    <property type="gene ID" value="AT2G28520"/>
</dbReference>
<dbReference type="GeneID" id="817400"/>
<dbReference type="Gramene" id="AT2G28520.1">
    <property type="protein sequence ID" value="AT2G28520.1"/>
    <property type="gene ID" value="AT2G28520"/>
</dbReference>
<dbReference type="KEGG" id="ath:AT2G28520"/>
<dbReference type="Araport" id="AT2G28520"/>
<dbReference type="TAIR" id="AT2G28520">
    <property type="gene designation" value="VHA-A1"/>
</dbReference>
<dbReference type="eggNOG" id="KOG2189">
    <property type="taxonomic scope" value="Eukaryota"/>
</dbReference>
<dbReference type="HOGENOM" id="CLU_005230_0_0_1"/>
<dbReference type="InParanoid" id="Q8RWZ7"/>
<dbReference type="OMA" id="TYVQLYI"/>
<dbReference type="PhylomeDB" id="Q8RWZ7"/>
<dbReference type="PRO" id="PR:Q8RWZ7"/>
<dbReference type="Proteomes" id="UP000006548">
    <property type="component" value="Chromosome 2"/>
</dbReference>
<dbReference type="ExpressionAtlas" id="Q8RWZ7">
    <property type="expression patterns" value="baseline and differential"/>
</dbReference>
<dbReference type="GO" id="GO:0005768">
    <property type="term" value="C:endosome"/>
    <property type="evidence" value="ECO:0007005"/>
    <property type="project" value="TAIR"/>
</dbReference>
<dbReference type="GO" id="GO:0005794">
    <property type="term" value="C:Golgi apparatus"/>
    <property type="evidence" value="ECO:0007005"/>
    <property type="project" value="TAIR"/>
</dbReference>
<dbReference type="GO" id="GO:0005802">
    <property type="term" value="C:trans-Golgi network"/>
    <property type="evidence" value="ECO:0007005"/>
    <property type="project" value="TAIR"/>
</dbReference>
<dbReference type="GO" id="GO:0032588">
    <property type="term" value="C:trans-Golgi network membrane"/>
    <property type="evidence" value="ECO:0000314"/>
    <property type="project" value="UniProtKB"/>
</dbReference>
<dbReference type="GO" id="GO:0012510">
    <property type="term" value="C:trans-Golgi network transport vesicle membrane"/>
    <property type="evidence" value="ECO:0000314"/>
    <property type="project" value="TAIR"/>
</dbReference>
<dbReference type="GO" id="GO:0000220">
    <property type="term" value="C:vacuolar proton-transporting V-type ATPase, V0 domain"/>
    <property type="evidence" value="ECO:0007669"/>
    <property type="project" value="InterPro"/>
</dbReference>
<dbReference type="GO" id="GO:0005773">
    <property type="term" value="C:vacuole"/>
    <property type="evidence" value="ECO:0007005"/>
    <property type="project" value="TAIR"/>
</dbReference>
<dbReference type="GO" id="GO:0046961">
    <property type="term" value="F:proton-transporting ATPase activity, rotational mechanism"/>
    <property type="evidence" value="ECO:0007669"/>
    <property type="project" value="InterPro"/>
</dbReference>
<dbReference type="GO" id="GO:0070070">
    <property type="term" value="P:proton-transporting V-type ATPase complex assembly"/>
    <property type="evidence" value="ECO:0000315"/>
    <property type="project" value="UniProtKB"/>
</dbReference>
<dbReference type="InterPro" id="IPR002490">
    <property type="entry name" value="V-ATPase_116kDa_su"/>
</dbReference>
<dbReference type="InterPro" id="IPR026028">
    <property type="entry name" value="V-type_ATPase_116kDa_su_euka"/>
</dbReference>
<dbReference type="PANTHER" id="PTHR11629:SF72">
    <property type="entry name" value="V-TYPE PROTON ATPASE SUBUNIT A1"/>
    <property type="match status" value="1"/>
</dbReference>
<dbReference type="PANTHER" id="PTHR11629">
    <property type="entry name" value="VACUOLAR PROTON ATPASES"/>
    <property type="match status" value="1"/>
</dbReference>
<dbReference type="Pfam" id="PF01496">
    <property type="entry name" value="V_ATPase_I"/>
    <property type="match status" value="1"/>
</dbReference>
<dbReference type="PIRSF" id="PIRSF001293">
    <property type="entry name" value="ATP6V0A1"/>
    <property type="match status" value="1"/>
</dbReference>
<sequence>MEEFLDKLPQMDLMRSEKMTLVQLIIPVESAHRSITYLGELGLLQFRDLNADKSPFQRTFANQVKRCGEMSRKLRFFKDQIDKAGLRCSPRLEIEPDIALGDLERQLADHEHEVLEMNSNSEKLRQTYNELLEFKIVLEKASGFLVSSNTHAIGEEIELHESTYSNNGFIETASLLEQEMNPGHSNQSGLRFISGIINKDKLLKFERMLFRATRGNMLFNQTTSDEEIMDPSTSEMVEKVVFVVFFSGEQARTKILKICEAFGANCYPVPEDTTKQRQLTREVLSRLSDLEATLDAGTRHRNNALNSVGYSLTNWITTVRREKAVYDTLNMLNFDVTKKCLVGEGWCPTFAKTQIHEVLQRATFDSSSQVGVIFHVMQAVESPPTYFRTNKLTNAFQEIIDAYGVARYQEANPAVYSVVTYPFLFAVMFGDWGHGLCLLLGALYLLARERKLSTQKLGSFMEMLFGGRYVILLMALFSIYCGLIYNEFFSVPFHIFGGSAYKCRDTTCSDAYTVGLIKYRDPYPFGVDPSWRGSRTELPYLNSLKMKMSILLGIAQMNLGLILSFFNARFFGSSLDIRYQFIPQMIFLNSLFGYLSLLIIIKWCTGSQADLYHVMIYMFLSPTEELGENELFWGQRPLQIVLLLLAFIAVPWMLFPKPFALRKIHMERFQGRTYGVLVSSEVDLDVEPDSARGGGHHEEEFNFSEIFVHQLIHSIEFVLGSVSNTASYLRLWALSLAHSELSTVFYEKVLLLAWGYENILIRLIGVAVFAFATAFILLMMETLSAFLHALRLHWVEFMGKFFNGDGYKFKPFSFALI</sequence>
<proteinExistence type="evidence at transcript level"/>
<keyword id="KW-0175">Coiled coil</keyword>
<keyword id="KW-0333">Golgi apparatus</keyword>
<keyword id="KW-0375">Hydrogen ion transport</keyword>
<keyword id="KW-0406">Ion transport</keyword>
<keyword id="KW-0472">Membrane</keyword>
<keyword id="KW-1185">Reference proteome</keyword>
<keyword id="KW-0812">Transmembrane</keyword>
<keyword id="KW-1133">Transmembrane helix</keyword>
<keyword id="KW-0813">Transport</keyword>
<keyword id="KW-0926">Vacuole</keyword>
<evidence type="ECO:0000250" key="1"/>
<evidence type="ECO:0000255" key="2"/>
<evidence type="ECO:0000269" key="3">
    <source>
    </source>
</evidence>
<evidence type="ECO:0000269" key="4">
    <source>
    </source>
</evidence>
<evidence type="ECO:0000303" key="5">
    <source>
    </source>
</evidence>
<evidence type="ECO:0000305" key="6"/>
<evidence type="ECO:0000312" key="7">
    <source>
        <dbReference type="Araport" id="AT2G28520"/>
    </source>
</evidence>
<evidence type="ECO:0000312" key="8">
    <source>
        <dbReference type="EMBL" id="AAD21487.2"/>
    </source>
</evidence>
<organism>
    <name type="scientific">Arabidopsis thaliana</name>
    <name type="common">Mouse-ear cress</name>
    <dbReference type="NCBI Taxonomy" id="3702"/>
    <lineage>
        <taxon>Eukaryota</taxon>
        <taxon>Viridiplantae</taxon>
        <taxon>Streptophyta</taxon>
        <taxon>Embryophyta</taxon>
        <taxon>Tracheophyta</taxon>
        <taxon>Spermatophyta</taxon>
        <taxon>Magnoliopsida</taxon>
        <taxon>eudicotyledons</taxon>
        <taxon>Gunneridae</taxon>
        <taxon>Pentapetalae</taxon>
        <taxon>rosids</taxon>
        <taxon>malvids</taxon>
        <taxon>Brassicales</taxon>
        <taxon>Brassicaceae</taxon>
        <taxon>Camelineae</taxon>
        <taxon>Arabidopsis</taxon>
    </lineage>
</organism>